<organism>
    <name type="scientific">Mycobacterium tuberculosis (strain ATCC 25618 / H37Rv)</name>
    <dbReference type="NCBI Taxonomy" id="83332"/>
    <lineage>
        <taxon>Bacteria</taxon>
        <taxon>Bacillati</taxon>
        <taxon>Actinomycetota</taxon>
        <taxon>Actinomycetes</taxon>
        <taxon>Mycobacteriales</taxon>
        <taxon>Mycobacteriaceae</taxon>
        <taxon>Mycobacterium</taxon>
        <taxon>Mycobacterium tuberculosis complex</taxon>
    </lineage>
</organism>
<protein>
    <recommendedName>
        <fullName evidence="10">Biotin--[acetyl-CoA-carboxylase] ligase</fullName>
        <ecNumber evidence="2 6">6.3.4.15</ecNumber>
    </recommendedName>
    <alternativeName>
        <fullName evidence="10">Biotin--[biotin carboxyl-carrier protein] ligase</fullName>
    </alternativeName>
    <alternativeName>
        <fullName evidence="9">Biotin--protein ligase</fullName>
        <shortName evidence="9">BPL</shortName>
    </alternativeName>
    <alternativeName>
        <fullName evidence="10">Biotin-[acetyl-CoA carboxylase] synthetase</fullName>
    </alternativeName>
</protein>
<gene>
    <name evidence="9" type="primary">birA</name>
    <name evidence="13" type="ordered locus">Rv3279c</name>
</gene>
<name>BIRA_MYCTU</name>
<dbReference type="EC" id="6.3.4.15" evidence="2 6"/>
<dbReference type="EMBL" id="AL123456">
    <property type="protein sequence ID" value="CCP46098.1"/>
    <property type="molecule type" value="Genomic_DNA"/>
</dbReference>
<dbReference type="RefSeq" id="NP_217796.1">
    <property type="nucleotide sequence ID" value="NC_000962.3"/>
</dbReference>
<dbReference type="RefSeq" id="WP_003899999.1">
    <property type="nucleotide sequence ID" value="NZ_NVQJ01000003.1"/>
</dbReference>
<dbReference type="PDB" id="2CGH">
    <property type="method" value="X-ray"/>
    <property type="resolution" value="1.80 A"/>
    <property type="chains" value="A/B=1-266"/>
</dbReference>
<dbReference type="PDB" id="3L1A">
    <property type="method" value="X-ray"/>
    <property type="resolution" value="2.69 A"/>
    <property type="chains" value="A/B=1-266"/>
</dbReference>
<dbReference type="PDB" id="3L2Z">
    <property type="method" value="X-ray"/>
    <property type="resolution" value="2.80 A"/>
    <property type="chains" value="A/B=1-266"/>
</dbReference>
<dbReference type="PDB" id="3RUX">
    <property type="method" value="X-ray"/>
    <property type="resolution" value="1.70 A"/>
    <property type="chains" value="A/B=2-266"/>
</dbReference>
<dbReference type="PDB" id="4OP0">
    <property type="method" value="X-ray"/>
    <property type="resolution" value="1.70 A"/>
    <property type="chains" value="A/B=3-266"/>
</dbReference>
<dbReference type="PDB" id="4XTU">
    <property type="method" value="X-ray"/>
    <property type="resolution" value="1.65 A"/>
    <property type="chains" value="A/B=2-266"/>
</dbReference>
<dbReference type="PDB" id="4XTV">
    <property type="method" value="X-ray"/>
    <property type="resolution" value="1.45 A"/>
    <property type="chains" value="A/B=2-266"/>
</dbReference>
<dbReference type="PDB" id="4XTW">
    <property type="method" value="X-ray"/>
    <property type="resolution" value="2.30 A"/>
    <property type="chains" value="A/B=2-266"/>
</dbReference>
<dbReference type="PDB" id="4XTX">
    <property type="method" value="X-ray"/>
    <property type="resolution" value="2.30 A"/>
    <property type="chains" value="A/B=2-266"/>
</dbReference>
<dbReference type="PDB" id="4XTY">
    <property type="method" value="X-ray"/>
    <property type="resolution" value="1.80 A"/>
    <property type="chains" value="A/B=2-266"/>
</dbReference>
<dbReference type="PDB" id="4XTZ">
    <property type="method" value="X-ray"/>
    <property type="resolution" value="1.90 A"/>
    <property type="chains" value="A/B=2-266"/>
</dbReference>
<dbReference type="PDB" id="4XU0">
    <property type="method" value="X-ray"/>
    <property type="resolution" value="1.60 A"/>
    <property type="chains" value="A/B=2-266"/>
</dbReference>
<dbReference type="PDB" id="4XU1">
    <property type="method" value="X-ray"/>
    <property type="resolution" value="1.70 A"/>
    <property type="chains" value="A/B=2-266"/>
</dbReference>
<dbReference type="PDB" id="4XU2">
    <property type="method" value="X-ray"/>
    <property type="resolution" value="1.85 A"/>
    <property type="chains" value="A/B=2-266"/>
</dbReference>
<dbReference type="PDB" id="4XU3">
    <property type="method" value="X-ray"/>
    <property type="resolution" value="2.24 A"/>
    <property type="chains" value="A/B=2-266"/>
</dbReference>
<dbReference type="PDBsum" id="2CGH"/>
<dbReference type="PDBsum" id="3L1A"/>
<dbReference type="PDBsum" id="3L2Z"/>
<dbReference type="PDBsum" id="3RUX"/>
<dbReference type="PDBsum" id="4OP0"/>
<dbReference type="PDBsum" id="4XTU"/>
<dbReference type="PDBsum" id="4XTV"/>
<dbReference type="PDBsum" id="4XTW"/>
<dbReference type="PDBsum" id="4XTX"/>
<dbReference type="PDBsum" id="4XTY"/>
<dbReference type="PDBsum" id="4XTZ"/>
<dbReference type="PDBsum" id="4XU0"/>
<dbReference type="PDBsum" id="4XU1"/>
<dbReference type="PDBsum" id="4XU2"/>
<dbReference type="PDBsum" id="4XU3"/>
<dbReference type="SMR" id="I6YFP0"/>
<dbReference type="FunCoup" id="I6YFP0">
    <property type="interactions" value="88"/>
</dbReference>
<dbReference type="STRING" id="83332.Rv3279c"/>
<dbReference type="ChEMBL" id="CHEMBL3611962"/>
<dbReference type="PaxDb" id="83332-Rv3279c"/>
<dbReference type="DNASU" id="888726"/>
<dbReference type="GeneID" id="888726"/>
<dbReference type="KEGG" id="mtu:Rv3279c"/>
<dbReference type="KEGG" id="mtv:RVBD_3279c"/>
<dbReference type="PATRIC" id="fig|83332.111.peg.3661"/>
<dbReference type="TubercuList" id="Rv3279c"/>
<dbReference type="eggNOG" id="COG0340">
    <property type="taxonomic scope" value="Bacteria"/>
</dbReference>
<dbReference type="InParanoid" id="I6YFP0"/>
<dbReference type="OrthoDB" id="9807064at2"/>
<dbReference type="PhylomeDB" id="I6YFP0"/>
<dbReference type="BRENDA" id="6.3.4.15">
    <property type="organism ID" value="3445"/>
</dbReference>
<dbReference type="EvolutionaryTrace" id="I6YFP0"/>
<dbReference type="Proteomes" id="UP000001584">
    <property type="component" value="Chromosome"/>
</dbReference>
<dbReference type="GO" id="GO:0005737">
    <property type="term" value="C:cytoplasm"/>
    <property type="evidence" value="ECO:0000318"/>
    <property type="project" value="GO_Central"/>
</dbReference>
<dbReference type="GO" id="GO:0032991">
    <property type="term" value="C:protein-containing complex"/>
    <property type="evidence" value="ECO:0000314"/>
    <property type="project" value="CAFA"/>
</dbReference>
<dbReference type="GO" id="GO:0005524">
    <property type="term" value="F:ATP binding"/>
    <property type="evidence" value="ECO:0007669"/>
    <property type="project" value="UniProtKB-KW"/>
</dbReference>
<dbReference type="GO" id="GO:0009374">
    <property type="term" value="F:biotin binding"/>
    <property type="evidence" value="ECO:0000314"/>
    <property type="project" value="CAFA"/>
</dbReference>
<dbReference type="GO" id="GO:0004077">
    <property type="term" value="F:biotin--[biotin carboxyl-carrier protein] ligase activity"/>
    <property type="evidence" value="ECO:0000318"/>
    <property type="project" value="GO_Central"/>
</dbReference>
<dbReference type="GO" id="GO:0042803">
    <property type="term" value="F:protein homodimerization activity"/>
    <property type="evidence" value="ECO:0000314"/>
    <property type="project" value="CAFA"/>
</dbReference>
<dbReference type="GO" id="GO:0008284">
    <property type="term" value="P:positive regulation of cell population proliferation"/>
    <property type="evidence" value="ECO:0000314"/>
    <property type="project" value="CAFA"/>
</dbReference>
<dbReference type="GO" id="GO:0036211">
    <property type="term" value="P:protein modification process"/>
    <property type="evidence" value="ECO:0007669"/>
    <property type="project" value="InterPro"/>
</dbReference>
<dbReference type="CDD" id="cd16442">
    <property type="entry name" value="BPL"/>
    <property type="match status" value="1"/>
</dbReference>
<dbReference type="Gene3D" id="2.30.30.100">
    <property type="match status" value="1"/>
</dbReference>
<dbReference type="Gene3D" id="3.30.930.10">
    <property type="entry name" value="Bira Bifunctional Protein, Domain 2"/>
    <property type="match status" value="1"/>
</dbReference>
<dbReference type="InterPro" id="IPR045864">
    <property type="entry name" value="aa-tRNA-synth_II/BPL/LPL"/>
</dbReference>
<dbReference type="InterPro" id="IPR004408">
    <property type="entry name" value="Biotin_CoA_COase_ligase"/>
</dbReference>
<dbReference type="InterPro" id="IPR003142">
    <property type="entry name" value="BPL_C"/>
</dbReference>
<dbReference type="InterPro" id="IPR004143">
    <property type="entry name" value="BPL_LPL_catalytic"/>
</dbReference>
<dbReference type="NCBIfam" id="TIGR00121">
    <property type="entry name" value="birA_ligase"/>
    <property type="match status" value="1"/>
</dbReference>
<dbReference type="PANTHER" id="PTHR12835">
    <property type="entry name" value="BIOTIN PROTEIN LIGASE"/>
    <property type="match status" value="1"/>
</dbReference>
<dbReference type="PANTHER" id="PTHR12835:SF5">
    <property type="entry name" value="BIOTIN--PROTEIN LIGASE"/>
    <property type="match status" value="1"/>
</dbReference>
<dbReference type="Pfam" id="PF02237">
    <property type="entry name" value="BPL_C"/>
    <property type="match status" value="1"/>
</dbReference>
<dbReference type="Pfam" id="PF03099">
    <property type="entry name" value="BPL_LplA_LipB"/>
    <property type="match status" value="1"/>
</dbReference>
<dbReference type="SUPFAM" id="SSF55681">
    <property type="entry name" value="Class II aaRS and biotin synthetases"/>
    <property type="match status" value="1"/>
</dbReference>
<comment type="function">
    <text evidence="2 6">Catalyzes the transfer of biotin onto a conserved lysine residue of the biotin carboxyl carrier protein (BCCP) domain of acetyl-CoA carboxylase and converts it to active holo-BCCP (PubMed:18509457, PubMed:24723382). Forms an acyl-adenylate intermediate (PubMed:18509457, PubMed:24723382). Cannot use GTP or desthiobiotin (PubMed:18509457).</text>
</comment>
<comment type="catalytic activity">
    <reaction evidence="2 6">
        <text>biotin + L-lysyl-[protein] + ATP = N(6)-biotinyl-L-lysyl-[protein] + AMP + diphosphate + H(+)</text>
        <dbReference type="Rhea" id="RHEA:11756"/>
        <dbReference type="Rhea" id="RHEA-COMP:9752"/>
        <dbReference type="Rhea" id="RHEA-COMP:10505"/>
        <dbReference type="ChEBI" id="CHEBI:15378"/>
        <dbReference type="ChEBI" id="CHEBI:29969"/>
        <dbReference type="ChEBI" id="CHEBI:30616"/>
        <dbReference type="ChEBI" id="CHEBI:33019"/>
        <dbReference type="ChEBI" id="CHEBI:57586"/>
        <dbReference type="ChEBI" id="CHEBI:83144"/>
        <dbReference type="ChEBI" id="CHEBI:456215"/>
        <dbReference type="EC" id="6.3.4.15"/>
    </reaction>
    <physiologicalReaction direction="left-to-right" evidence="2 6">
        <dbReference type="Rhea" id="RHEA:11757"/>
    </physiologicalReaction>
</comment>
<comment type="catalytic activity">
    <reaction evidence="2 6">
        <text>biotin + ATP + H(+) = biotinyl-5'-AMP + diphosphate</text>
        <dbReference type="Rhea" id="RHEA:31115"/>
        <dbReference type="ChEBI" id="CHEBI:15378"/>
        <dbReference type="ChEBI" id="CHEBI:30616"/>
        <dbReference type="ChEBI" id="CHEBI:33019"/>
        <dbReference type="ChEBI" id="CHEBI:57586"/>
        <dbReference type="ChEBI" id="CHEBI:62414"/>
    </reaction>
    <physiologicalReaction direction="left-to-right" evidence="2 6">
        <dbReference type="Rhea" id="RHEA:31116"/>
    </physiologicalReaction>
</comment>
<comment type="catalytic activity">
    <reaction evidence="2 6">
        <text>biotinyl-5'-AMP + L-lysyl-[protein] = N(6)-biotinyl-L-lysyl-[protein] + AMP + 2 H(+)</text>
        <dbReference type="Rhea" id="RHEA:59732"/>
        <dbReference type="Rhea" id="RHEA-COMP:9752"/>
        <dbReference type="Rhea" id="RHEA-COMP:10505"/>
        <dbReference type="ChEBI" id="CHEBI:15378"/>
        <dbReference type="ChEBI" id="CHEBI:29969"/>
        <dbReference type="ChEBI" id="CHEBI:62414"/>
        <dbReference type="ChEBI" id="CHEBI:83144"/>
        <dbReference type="ChEBI" id="CHEBI:456215"/>
    </reaction>
    <physiologicalReaction direction="left-to-right" evidence="2 6">
        <dbReference type="Rhea" id="RHEA:59733"/>
    </physiologicalReaction>
</comment>
<comment type="activity regulation">
    <text evidence="8">Binding of biotin and ATP significantly increases the thermal stability of BirA and leads to the formation of a high affinity holoenzyme complex.</text>
</comment>
<comment type="biophysicochemical properties">
    <kinetics>
        <KM evidence="2">0.42 uM for biotin</KM>
        <KM evidence="2">21.08 uM for Mg/ATP</KM>
        <KM evidence="6">0.2 mM for ATP</KM>
        <KM evidence="2">5.2 uM for apo-BCCP</KM>
        <text evidence="2 6">kcat is 0.034 sec(-1) with biotin as substrate. kcat is 0.0282 sec(-1) with Mg/ATP as substrate. kcat is 0.030 sec(-1) with apo-BCCP as substrate (PubMed:18509457). kcat is 0.017 sec(-1) with ATP as substrate (PubMed:24723382).</text>
    </kinetics>
    <phDependence>
        <text evidence="2">Optimum pH is 7.5-8.0.</text>
    </phDependence>
</comment>
<comment type="subunit">
    <text evidence="2 3 4 6">Monomer in solution (PubMed:18509457, PubMed:20169168, PubMed:24723382). Forms dimers under specific crystallization conditions (PubMed:18540066, PubMed:20169168).</text>
</comment>
<comment type="domain">
    <text evidence="11">Belongs to monofunctional group I BPL as it lacks the N-terminal helix-turn-helix (HTH) DNA-binding domain.</text>
</comment>
<comment type="miscellaneous">
    <text evidence="5 7 8">Identified as a drug target (PubMed:22118677, PubMed:26299766, PubMed:28942842). Inhibited by Bio-AMS, an acylsulfamide bisubstrate inhibitor, and analogs (PubMed:22118677, PubMed:26299766). Bio-AMS displays potent subnanomolar enzyme inhibition and antitubercular activity against multidrug resistant and extensively drug resistant Mtb strains (PubMed:22118677).</text>
</comment>
<comment type="similarity">
    <text evidence="10">Belongs to the biotin--protein ligase family.</text>
</comment>
<sequence>MTDRDRLRPPLDERSLRDQLIGAGSGWRQLDVVAQTGSTNADLLARAASGADIDGVVLIAEHQTAGRGRHGRGWAATARAQIILSVGVRVVDVPVQAWGWLSLAAGLAVLDSVAPLIAVPPAETGLKWPNDVLARGGKLAGILAEVAQPFVVLGVGLNVTQAPEEVDPDATSLLDLGVAAPDRNRIASRLLRELEARIIQWRNANPQLAADYRARSLTIGSRVRVELPGGQDVVGIARDIDDQGRLCLDVGGRTVVVSAGDVVHLR</sequence>
<reference key="1">
    <citation type="journal article" date="1998" name="Nature">
        <title>Deciphering the biology of Mycobacterium tuberculosis from the complete genome sequence.</title>
        <authorList>
            <person name="Cole S.T."/>
            <person name="Brosch R."/>
            <person name="Parkhill J."/>
            <person name="Garnier T."/>
            <person name="Churcher C.M."/>
            <person name="Harris D.E."/>
            <person name="Gordon S.V."/>
            <person name="Eiglmeier K."/>
            <person name="Gas S."/>
            <person name="Barry C.E. III"/>
            <person name="Tekaia F."/>
            <person name="Badcock K."/>
            <person name="Basham D."/>
            <person name="Brown D."/>
            <person name="Chillingworth T."/>
            <person name="Connor R."/>
            <person name="Davies R.M."/>
            <person name="Devlin K."/>
            <person name="Feltwell T."/>
            <person name="Gentles S."/>
            <person name="Hamlin N."/>
            <person name="Holroyd S."/>
            <person name="Hornsby T."/>
            <person name="Jagels K."/>
            <person name="Krogh A."/>
            <person name="McLean J."/>
            <person name="Moule S."/>
            <person name="Murphy L.D."/>
            <person name="Oliver S."/>
            <person name="Osborne J."/>
            <person name="Quail M.A."/>
            <person name="Rajandream M.A."/>
            <person name="Rogers J."/>
            <person name="Rutter S."/>
            <person name="Seeger K."/>
            <person name="Skelton S."/>
            <person name="Squares S."/>
            <person name="Squares R."/>
            <person name="Sulston J.E."/>
            <person name="Taylor K."/>
            <person name="Whitehead S."/>
            <person name="Barrell B.G."/>
        </authorList>
    </citation>
    <scope>NUCLEOTIDE SEQUENCE [LARGE SCALE GENOMIC DNA]</scope>
    <source>
        <strain>ATCC 25618 / H37Rv</strain>
    </source>
</reference>
<reference key="2">
    <citation type="journal article" date="2008" name="PLoS ONE">
        <title>Ligand specificity of group I biotin protein ligase of Mycobacterium tuberculosis.</title>
        <authorList>
            <person name="Purushothaman S."/>
            <person name="Gupta G."/>
            <person name="Srivastava R."/>
            <person name="Ramu V.G."/>
            <person name="Surolia A."/>
        </authorList>
    </citation>
    <scope>FUNCTION</scope>
    <scope>CATALYTIC ACTIVITY</scope>
    <scope>BIOPHYSICOCHEMICAL PROPERTIES</scope>
    <scope>SUBUNIT</scope>
    <scope>DOMAIN</scope>
</reference>
<reference key="3">
    <citation type="journal article" date="2008" name="Acta Crystallogr. F">
        <title>Crystallization and preliminary X-ray diffraction analysis of biotin acetyl-CoA carboxylase ligase (BirA) from Mycobacterium tuberculosis.</title>
        <authorList>
            <person name="Gupta V."/>
            <person name="Gupta R.K."/>
            <person name="Khare G."/>
            <person name="Surolia A."/>
            <person name="Salunke D.M."/>
            <person name="Tyagi A.K."/>
        </authorList>
    </citation>
    <scope>SUBUNIT</scope>
    <scope>CRYSTALLIZATION</scope>
    <source>
        <strain>H37Rv</strain>
    </source>
</reference>
<reference key="4">
    <citation type="journal article" date="2011" name="Mol. Cell. Proteomics">
        <title>Proteogenomic analysis of Mycobacterium tuberculosis by high resolution mass spectrometry.</title>
        <authorList>
            <person name="Kelkar D.S."/>
            <person name="Kumar D."/>
            <person name="Kumar P."/>
            <person name="Balakrishnan L."/>
            <person name="Muthusamy B."/>
            <person name="Yadav A.K."/>
            <person name="Shrivastava P."/>
            <person name="Marimuthu A."/>
            <person name="Anand S."/>
            <person name="Sundaram H."/>
            <person name="Kingsbury R."/>
            <person name="Harsha H.C."/>
            <person name="Nair B."/>
            <person name="Prasad T.S."/>
            <person name="Chauhan D.S."/>
            <person name="Katoch K."/>
            <person name="Katoch V.M."/>
            <person name="Kumar P."/>
            <person name="Chaerkady R."/>
            <person name="Ramachandran S."/>
            <person name="Dash D."/>
            <person name="Pandey A."/>
        </authorList>
    </citation>
    <scope>IDENTIFICATION BY MASS SPECTROMETRY [LARGE SCALE ANALYSIS]</scope>
    <source>
        <strain>ATCC 25618 / H37Rv</strain>
    </source>
</reference>
<reference key="5">
    <citation type="journal article" date="2017" name="Microbiol. Res.">
        <title>A green fluorescent protein-based assay for high-throughput ligand-binding studies of a mycobacterial biotin protein ligase.</title>
        <authorList>
            <person name="Bond T.E.H."/>
            <person name="Sorenson A.E."/>
            <person name="Schaeffer P.M."/>
        </authorList>
    </citation>
    <scope>ACTIVITY REGULATION</scope>
    <scope>IDENTIFICATION AS A DRUG TARGET</scope>
</reference>
<reference evidence="15 16" key="6">
    <citation type="journal article" date="2010" name="PLoS ONE">
        <title>Structural ordering of disordered ligand-binding loops of biotin protein ligase into active conformations as a consequence of dehydration.</title>
        <authorList>
            <person name="Gupta V."/>
            <person name="Gupta R.K."/>
            <person name="Khare G."/>
            <person name="Salunke D.M."/>
            <person name="Surolia A."/>
            <person name="Tyagi A.K."/>
        </authorList>
    </citation>
    <scope>X-RAY CRYSTALLOGRAPHY (2.69 ANGSTROMS) OF DEHYDRATED AND HYDRATED ENZYME</scope>
    <scope>SUBUNIT</scope>
</reference>
<reference evidence="17" key="7">
    <citation type="journal article" date="2011" name="Chem. Biol.">
        <title>Bisubstrate adenylation inhibitors of biotin protein ligase from Mycobacterium tuberculosis.</title>
        <authorList>
            <person name="Duckworth B.P."/>
            <person name="Geders T.W."/>
            <person name="Tiwari D."/>
            <person name="Boshoff H.I."/>
            <person name="Sibbald P.A."/>
            <person name="Barry C.E."/>
            <person name="Schnappinger D."/>
            <person name="Finzel B.C."/>
            <person name="Aldrich C.C."/>
        </authorList>
    </citation>
    <scope>X-RAY CRYSTALLOGRAPHY (1.70 ANGSTROMS) OF 2-266 IN COMPLEX WITH BISUBSTRATE INHIBITOR BIO-AMS</scope>
    <scope>IDENTIFICATION AS A DRUG TARGET</scope>
</reference>
<reference evidence="14 18" key="8">
    <citation type="journal article" date="2014" name="Protein Sci.">
        <title>Active site conformational changes upon reaction intermediate biotinyl-5'-AMP binding in biotin protein ligase from Mycobacterium tuberculosis.</title>
        <authorList>
            <person name="Ma Q."/>
            <person name="Akhter Y."/>
            <person name="Wilmanns M."/>
            <person name="Ehebauer M.T."/>
        </authorList>
    </citation>
    <scope>X-RAY CRYSTALLOGRAPHY (1.70 ANGSTROMS) OF 3-266 OF APOENZYME AND IN COMPLEX WITH REACTION INTERMEDIATE BIOTINYL-5-AMP</scope>
    <scope>FUNCTION</scope>
    <scope>CATALYTIC ACTIVITY</scope>
    <scope>BIOPHYSICOCHEMICAL PROPERTIES</scope>
    <scope>SUBUNIT</scope>
    <scope>MUTAGENESIS OF LYS-138</scope>
</reference>
<reference evidence="20 21 22 23 24 25 26 27 28" key="9">
    <citation type="journal article" date="2015" name="J. Med. Chem.">
        <title>Targeting Mycobacterium tuberculosis biotin protein ligase (MtBPL) with nucleoside-based bisubstrate adenylation inhibitors.</title>
        <authorList>
            <person name="Bockman M.R."/>
            <person name="Kalinda A.S."/>
            <person name="Petrelli R."/>
            <person name="De la Mora-Rey T."/>
            <person name="Tiwari D."/>
            <person name="Liu F."/>
            <person name="Dawadi S."/>
            <person name="Nandakumar M."/>
            <person name="Rhee K.Y."/>
            <person name="Schnappinger D."/>
            <person name="Finzel B.C."/>
            <person name="Aldrich C.C."/>
        </authorList>
    </citation>
    <scope>X-RAY CRYSTALLOGRAPHY (1.45 ANGSTROMS) OF 2-266 IN COMPLEXES WITH INHIBITORS</scope>
    <scope>IDENTIFICATION AS A DRUG TARGET</scope>
</reference>
<reference evidence="19" key="10">
    <citation type="submission" date="2015-01" db="PDB data bank">
        <title>Mycobacterium tuberculosis biotin ligase complexed with bisubstrate inhibitor (N-({[(1R,2S,3R,4R)-4-(6-amino-9H-purin-9-yl)-2,3-dihydroxycyclopentyl]methyl}sulfamoyl)-5-[(3aS,4S,6aR)-2-oxohexahydro-1H-thieno[3,4-d]imidazol-4-yl]pentanamide).</title>
        <authorList>
            <person name="Bockman M.R."/>
            <person name="Kalinda A.S."/>
            <person name="Petrelli R."/>
            <person name="De la Mora-Rey T."/>
            <person name="Tawari D."/>
            <person name="Liu F."/>
            <person name="Schnappinger D."/>
            <person name="Finzel B.C."/>
            <person name="Aldrich C.C."/>
        </authorList>
    </citation>
    <scope>X-RAY CRYSTALLOGRAPHY (1.65 ANGSTROMS) OF 2-266 IN COMPLEX WITH INHIBITOR</scope>
</reference>
<evidence type="ECO:0000255" key="1">
    <source>
        <dbReference type="PROSITE-ProRule" id="PRU01067"/>
    </source>
</evidence>
<evidence type="ECO:0000269" key="2">
    <source>
    </source>
</evidence>
<evidence type="ECO:0000269" key="3">
    <source>
    </source>
</evidence>
<evidence type="ECO:0000269" key="4">
    <source>
    </source>
</evidence>
<evidence type="ECO:0000269" key="5">
    <source>
    </source>
</evidence>
<evidence type="ECO:0000269" key="6">
    <source>
    </source>
</evidence>
<evidence type="ECO:0000269" key="7">
    <source>
    </source>
</evidence>
<evidence type="ECO:0000269" key="8">
    <source>
    </source>
</evidence>
<evidence type="ECO:0000303" key="9">
    <source>
    </source>
</evidence>
<evidence type="ECO:0000305" key="10"/>
<evidence type="ECO:0000305" key="11">
    <source>
    </source>
</evidence>
<evidence type="ECO:0000305" key="12">
    <source>
    </source>
</evidence>
<evidence type="ECO:0000312" key="13">
    <source>
        <dbReference type="EMBL" id="CCP46098.1"/>
    </source>
</evidence>
<evidence type="ECO:0007744" key="14">
    <source>
        <dbReference type="PDB" id="2CGH"/>
    </source>
</evidence>
<evidence type="ECO:0007744" key="15">
    <source>
        <dbReference type="PDB" id="3L1A"/>
    </source>
</evidence>
<evidence type="ECO:0007744" key="16">
    <source>
        <dbReference type="PDB" id="3L2Z"/>
    </source>
</evidence>
<evidence type="ECO:0007744" key="17">
    <source>
        <dbReference type="PDB" id="3RUX"/>
    </source>
</evidence>
<evidence type="ECO:0007744" key="18">
    <source>
        <dbReference type="PDB" id="4OP0"/>
    </source>
</evidence>
<evidence type="ECO:0007744" key="19">
    <source>
        <dbReference type="PDB" id="4XTU"/>
    </source>
</evidence>
<evidence type="ECO:0007744" key="20">
    <source>
        <dbReference type="PDB" id="4XTV"/>
    </source>
</evidence>
<evidence type="ECO:0007744" key="21">
    <source>
        <dbReference type="PDB" id="4XTW"/>
    </source>
</evidence>
<evidence type="ECO:0007744" key="22">
    <source>
        <dbReference type="PDB" id="4XTX"/>
    </source>
</evidence>
<evidence type="ECO:0007744" key="23">
    <source>
        <dbReference type="PDB" id="4XTY"/>
    </source>
</evidence>
<evidence type="ECO:0007744" key="24">
    <source>
        <dbReference type="PDB" id="4XTZ"/>
    </source>
</evidence>
<evidence type="ECO:0007744" key="25">
    <source>
        <dbReference type="PDB" id="4XU0"/>
    </source>
</evidence>
<evidence type="ECO:0007744" key="26">
    <source>
        <dbReference type="PDB" id="4XU1"/>
    </source>
</evidence>
<evidence type="ECO:0007744" key="27">
    <source>
        <dbReference type="PDB" id="4XU2"/>
    </source>
</evidence>
<evidence type="ECO:0007744" key="28">
    <source>
        <dbReference type="PDB" id="4XU3"/>
    </source>
</evidence>
<evidence type="ECO:0007829" key="29">
    <source>
        <dbReference type="PDB" id="4OP0"/>
    </source>
</evidence>
<evidence type="ECO:0007829" key="30">
    <source>
        <dbReference type="PDB" id="4XTV"/>
    </source>
</evidence>
<evidence type="ECO:0007829" key="31">
    <source>
        <dbReference type="PDB" id="4XTX"/>
    </source>
</evidence>
<proteinExistence type="evidence at protein level"/>
<keyword id="KW-0002">3D-structure</keyword>
<keyword id="KW-0067">ATP-binding</keyword>
<keyword id="KW-0092">Biotin</keyword>
<keyword id="KW-0436">Ligase</keyword>
<keyword id="KW-0547">Nucleotide-binding</keyword>
<keyword id="KW-1185">Reference proteome</keyword>
<feature type="chain" id="PRO_0000452501" description="Biotin--[acetyl-CoA-carboxylase] ligase">
    <location>
        <begin position="1"/>
        <end position="266"/>
    </location>
</feature>
<feature type="domain" description="BPL/LPL catalytic" evidence="1">
    <location>
        <begin position="14"/>
        <end position="202"/>
    </location>
</feature>
<feature type="binding site" evidence="12">
    <location>
        <begin position="38"/>
        <end position="39"/>
    </location>
    <ligand>
        <name>biotin</name>
        <dbReference type="ChEBI" id="CHEBI:57586"/>
    </ligand>
</feature>
<feature type="binding site" evidence="12">
    <location>
        <position position="63"/>
    </location>
    <ligand>
        <name>biotin</name>
        <dbReference type="ChEBI" id="CHEBI:57586"/>
    </ligand>
</feature>
<feature type="binding site" evidence="12">
    <location>
        <position position="67"/>
    </location>
    <ligand>
        <name>biotin</name>
        <dbReference type="ChEBI" id="CHEBI:57586"/>
    </ligand>
</feature>
<feature type="binding site" evidence="12">
    <location>
        <position position="138"/>
    </location>
    <ligand>
        <name>biotin</name>
        <dbReference type="ChEBI" id="CHEBI:57586"/>
    </ligand>
</feature>
<feature type="mutagenesis site" description="Loss of activity." evidence="6">
    <original>K</original>
    <variation>S</variation>
    <location>
        <position position="138"/>
    </location>
</feature>
<feature type="helix" evidence="30">
    <location>
        <begin position="3"/>
        <end position="7"/>
    </location>
</feature>
<feature type="helix" evidence="30">
    <location>
        <begin position="13"/>
        <end position="20"/>
    </location>
</feature>
<feature type="strand" evidence="30">
    <location>
        <begin position="29"/>
        <end position="37"/>
    </location>
</feature>
<feature type="helix" evidence="30">
    <location>
        <begin position="39"/>
        <end position="48"/>
    </location>
</feature>
<feature type="strand" evidence="30">
    <location>
        <begin position="56"/>
        <end position="67"/>
    </location>
</feature>
<feature type="helix" evidence="30">
    <location>
        <begin position="69"/>
        <end position="71"/>
    </location>
</feature>
<feature type="strand" evidence="30">
    <location>
        <begin position="80"/>
        <end position="89"/>
    </location>
</feature>
<feature type="helix" evidence="30">
    <location>
        <begin position="95"/>
        <end position="98"/>
    </location>
</feature>
<feature type="helix" evidence="30">
    <location>
        <begin position="99"/>
        <end position="113"/>
    </location>
</feature>
<feature type="helix" evidence="30">
    <location>
        <begin position="114"/>
        <end position="116"/>
    </location>
</feature>
<feature type="strand" evidence="30">
    <location>
        <begin position="117"/>
        <end position="119"/>
    </location>
</feature>
<feature type="helix" evidence="31">
    <location>
        <begin position="121"/>
        <end position="123"/>
    </location>
</feature>
<feature type="strand" evidence="30">
    <location>
        <begin position="125"/>
        <end position="127"/>
    </location>
</feature>
<feature type="turn" evidence="30">
    <location>
        <begin position="128"/>
        <end position="130"/>
    </location>
</feature>
<feature type="strand" evidence="30">
    <location>
        <begin position="131"/>
        <end position="134"/>
    </location>
</feature>
<feature type="strand" evidence="30">
    <location>
        <begin position="137"/>
        <end position="147"/>
    </location>
</feature>
<feature type="strand" evidence="30">
    <location>
        <begin position="150"/>
        <end position="160"/>
    </location>
</feature>
<feature type="helix" evidence="30">
    <location>
        <begin position="163"/>
        <end position="166"/>
    </location>
</feature>
<feature type="helix" evidence="30">
    <location>
        <begin position="174"/>
        <end position="176"/>
    </location>
</feature>
<feature type="helix" evidence="30">
    <location>
        <begin position="183"/>
        <end position="202"/>
    </location>
</feature>
<feature type="helix" evidence="30">
    <location>
        <begin position="206"/>
        <end position="214"/>
    </location>
</feature>
<feature type="strand" evidence="30">
    <location>
        <begin position="216"/>
        <end position="218"/>
    </location>
</feature>
<feature type="strand" evidence="30">
    <location>
        <begin position="221"/>
        <end position="226"/>
    </location>
</feature>
<feature type="turn" evidence="29">
    <location>
        <begin position="228"/>
        <end position="230"/>
    </location>
</feature>
<feature type="strand" evidence="30">
    <location>
        <begin position="232"/>
        <end position="240"/>
    </location>
</feature>
<feature type="strand" evidence="30">
    <location>
        <begin position="246"/>
        <end position="250"/>
    </location>
</feature>
<feature type="strand" evidence="30">
    <location>
        <begin position="253"/>
        <end position="259"/>
    </location>
</feature>
<feature type="strand" evidence="30">
    <location>
        <begin position="261"/>
        <end position="264"/>
    </location>
</feature>
<accession>I6YFP0</accession>